<name>MYO1_KLULA</name>
<keyword id="KW-0009">Actin-binding</keyword>
<keyword id="KW-0067">ATP-binding</keyword>
<keyword id="KW-0963">Cytoplasm</keyword>
<keyword id="KW-0206">Cytoskeleton</keyword>
<keyword id="KW-0378">Hydrolase</keyword>
<keyword id="KW-0505">Motor protein</keyword>
<keyword id="KW-0518">Myosin</keyword>
<keyword id="KW-0547">Nucleotide-binding</keyword>
<keyword id="KW-0597">Phosphoprotein</keyword>
<keyword id="KW-1185">Reference proteome</keyword>
<keyword id="KW-0677">Repeat</keyword>
<keyword id="KW-0728">SH3 domain</keyword>
<proteinExistence type="inferred from homology"/>
<organism>
    <name type="scientific">Kluyveromyces lactis (strain ATCC 8585 / CBS 2359 / DSM 70799 / NBRC 1267 / NRRL Y-1140 / WM37)</name>
    <name type="common">Yeast</name>
    <name type="synonym">Candida sphaerica</name>
    <dbReference type="NCBI Taxonomy" id="284590"/>
    <lineage>
        <taxon>Eukaryota</taxon>
        <taxon>Fungi</taxon>
        <taxon>Dikarya</taxon>
        <taxon>Ascomycota</taxon>
        <taxon>Saccharomycotina</taxon>
        <taxon>Saccharomycetes</taxon>
        <taxon>Saccharomycetales</taxon>
        <taxon>Saccharomycetaceae</taxon>
        <taxon>Kluyveromyces</taxon>
    </lineage>
</organism>
<reference key="1">
    <citation type="journal article" date="2004" name="Nature">
        <title>Genome evolution in yeasts.</title>
        <authorList>
            <person name="Dujon B."/>
            <person name="Sherman D."/>
            <person name="Fischer G."/>
            <person name="Durrens P."/>
            <person name="Casaregola S."/>
            <person name="Lafontaine I."/>
            <person name="de Montigny J."/>
            <person name="Marck C."/>
            <person name="Neuveglise C."/>
            <person name="Talla E."/>
            <person name="Goffard N."/>
            <person name="Frangeul L."/>
            <person name="Aigle M."/>
            <person name="Anthouard V."/>
            <person name="Babour A."/>
            <person name="Barbe V."/>
            <person name="Barnay S."/>
            <person name="Blanchin S."/>
            <person name="Beckerich J.-M."/>
            <person name="Beyne E."/>
            <person name="Bleykasten C."/>
            <person name="Boisrame A."/>
            <person name="Boyer J."/>
            <person name="Cattolico L."/>
            <person name="Confanioleri F."/>
            <person name="de Daruvar A."/>
            <person name="Despons L."/>
            <person name="Fabre E."/>
            <person name="Fairhead C."/>
            <person name="Ferry-Dumazet H."/>
            <person name="Groppi A."/>
            <person name="Hantraye F."/>
            <person name="Hennequin C."/>
            <person name="Jauniaux N."/>
            <person name="Joyet P."/>
            <person name="Kachouri R."/>
            <person name="Kerrest A."/>
            <person name="Koszul R."/>
            <person name="Lemaire M."/>
            <person name="Lesur I."/>
            <person name="Ma L."/>
            <person name="Muller H."/>
            <person name="Nicaud J.-M."/>
            <person name="Nikolski M."/>
            <person name="Oztas S."/>
            <person name="Ozier-Kalogeropoulos O."/>
            <person name="Pellenz S."/>
            <person name="Potier S."/>
            <person name="Richard G.-F."/>
            <person name="Straub M.-L."/>
            <person name="Suleau A."/>
            <person name="Swennen D."/>
            <person name="Tekaia F."/>
            <person name="Wesolowski-Louvel M."/>
            <person name="Westhof E."/>
            <person name="Wirth B."/>
            <person name="Zeniou-Meyer M."/>
            <person name="Zivanovic Y."/>
            <person name="Bolotin-Fukuhara M."/>
            <person name="Thierry A."/>
            <person name="Bouchier C."/>
            <person name="Caudron B."/>
            <person name="Scarpelli C."/>
            <person name="Gaillardin C."/>
            <person name="Weissenbach J."/>
            <person name="Wincker P."/>
            <person name="Souciet J.-L."/>
        </authorList>
    </citation>
    <scope>NUCLEOTIDE SEQUENCE [LARGE SCALE GENOMIC DNA]</scope>
    <source>
        <strain>ATCC 8585 / CBS 2359 / DSM 70799 / NBRC 1267 / NRRL Y-1140 / WM37</strain>
    </source>
</reference>
<gene>
    <name type="primary">MYO1</name>
    <name type="ordered locus">KLLA0B12562g</name>
</gene>
<evidence type="ECO:0000250" key="1"/>
<evidence type="ECO:0000255" key="2"/>
<evidence type="ECO:0000255" key="3">
    <source>
        <dbReference type="PROSITE-ProRule" id="PRU00192"/>
    </source>
</evidence>
<evidence type="ECO:0000255" key="4">
    <source>
        <dbReference type="PROSITE-ProRule" id="PRU00782"/>
    </source>
</evidence>
<evidence type="ECO:0000255" key="5">
    <source>
        <dbReference type="PROSITE-ProRule" id="PRU01093"/>
    </source>
</evidence>
<evidence type="ECO:0000256" key="6">
    <source>
        <dbReference type="SAM" id="MobiDB-lite"/>
    </source>
</evidence>
<evidence type="ECO:0000305" key="7"/>
<accession>Q6CVE9</accession>
<comment type="function">
    <text evidence="1">Type-I myosin implicated in the organization of the actin cytoskeleton. Required for proper actin cytoskeleton polarization. At the cell cortex, assembles in patch-like structures together with proteins from the actin-polymerizing machinery and promotes actin assembly. Functions as actin nucleation-promoting factor (NPF) for the Arp2/3 complex (By similarity).</text>
</comment>
<comment type="subcellular location">
    <subcellularLocation>
        <location evidence="1">Cytoplasm</location>
        <location evidence="1">Cytoskeleton</location>
        <location evidence="1">Actin patch</location>
    </subcellularLocation>
</comment>
<comment type="domain">
    <text evidence="1">The myosin motor domain displays actin-stimulated ATPase activity and generates a mechanochemical force.</text>
</comment>
<comment type="domain">
    <text evidence="1">The tail domain participates in molecular interactions that specify the role of the motor domain (By similarity). It is composed of several tail homology (TH) domains, namely a putative phospholipid-binding myosin tail domain (also named TH1), an Ala- and Pro-rich domain (TH2), followed by an SH3 domain and a C-terminal acidic domain (TH3).</text>
</comment>
<comment type="PTM">
    <text evidence="1">Phosphorylation of the TEDS site (Ser-355) is required for the polarization of the actin cytoskeleton. Phosphorylation probably activates the myosin-I ATPase activity (By similarity).</text>
</comment>
<comment type="similarity">
    <text evidence="7">Belongs to the TRAFAC class myosin-kinesin ATPase superfamily. Myosin family.</text>
</comment>
<sequence length="1260" mass="140209">MALIRRAKNKVAPQKRAETTIKKATFDATKKKEVGVSDLTLLSSISDDAINQNLKKRFENGTIYTYIGHVLISVNPFRDLGIYTDAVLESYKGKNRLEVPPHVFAIAEAMYYNLKAYNENQCVIISGESGAGKTEAAKRIMQYIAAASSTHEASIGKIKDMVLATNPLLESFGCAKTLRNNNSSRHGKYLEIRFNEQFEPCAGQITNYLLEKQRVVGQIRNERNFHIFYQFTKGASDTYRQNFGVLQPDQYIYTSASGCTSVDTIDDLHDYQETIKAMQVIGLSQEEQDQIFRMLSAILWIGNVTFVENNEGNAEVRDTSVTDFVAYLMQVDSGLLIKCLVERVMETGHGSRRGSVYHVPLNVVQATAVRDALAKAIYNNLFDWIVDRVNVSLKAFPGAVKSIGILDIYGFEIFEHNSFEQICINYVNEKLQQIFIQLTLKSEQEEYNKEQIQWTPIKYFDNKVVCDLIESKRPPGIFATLDDSVATAHADSNAADQAFAQRLNLFSTNAHFDLRSSKFVIKHYAGDVTYDISGMTDKNKDQLVKDLAELVQTTTNPFLSTIFPDTIDKSSKRRPPTAGNKIIKSANELVETLSKAQPSYIRTIKPNQTKSPRDYDDQQVLHQVKYLGLQENVRIRRAGFAYRQTFEKFVERFYLLSPKCSYAGDYTWQGDTLGAVKQILQDASIPTTEYQLGVTKVFIKTPETLFALEHMRDRYWYNMAARIQRAWRRFIQRRIDSAIKIQRAIREKKGGNQYEQLRDYGHRLLGGRKERRAMSLLGYRAFMGDYLSCNEMKSKGAFIKRQAGISEIVVFSIKGEALHSKFGRSAVRLPITIILTPTTLYIVGQTVAQNQVSYTVDRKVNISHIKHVSLTNLADDWVGIYVQGENLPDPFINTIFKTELITHLKQLNRAIEVKIGPTIEYQKKPGKLHTVKCQISESAPKYSDIYKSSTISVRQGRPANSRQAPKPEKKSTLLSDGPSYNSNQSKGYGQQQHAQPSYGQQQQQQQRYAPQSHATPQTTQKKRAPPPPGQQNFAASAAQTAYHPQQASHARVPSTNNAHTQHNRQPAQQAAQPVQQAAQPAATTSQPTRRVAPPPPPPPPTKQNIPKFQAAYDFTGTGSASELPLSKGTVITVSKQDPSGWSLGKLLDGSKEGWVPTNYIVEYKESSGPPPPPAPPVASSTTGYANSNNNAFAANDNVAAVAGAAAGATAGAAVAAASLANPGQNAFSVGLADALAARANTMRLESDDESTGNADEDDDW</sequence>
<feature type="chain" id="PRO_0000338552" description="Myosin-1">
    <location>
        <begin position="1"/>
        <end position="1260"/>
    </location>
</feature>
<feature type="domain" description="Myosin motor" evidence="4">
    <location>
        <begin position="34"/>
        <end position="713"/>
    </location>
</feature>
<feature type="domain" description="IQ 1">
    <location>
        <begin position="717"/>
        <end position="737"/>
    </location>
</feature>
<feature type="domain" description="IQ 2">
    <location>
        <begin position="738"/>
        <end position="763"/>
    </location>
</feature>
<feature type="domain" description="TH1" evidence="5">
    <location>
        <begin position="769"/>
        <end position="959"/>
    </location>
</feature>
<feature type="domain" description="SH3" evidence="3">
    <location>
        <begin position="1103"/>
        <end position="1165"/>
    </location>
</feature>
<feature type="region of interest" description="Actin-binding" evidence="1">
    <location>
        <begin position="402"/>
        <end position="484"/>
    </location>
</feature>
<feature type="region of interest" description="Disordered" evidence="6">
    <location>
        <begin position="948"/>
        <end position="1106"/>
    </location>
</feature>
<feature type="compositionally biased region" description="Polar residues" evidence="6">
    <location>
        <begin position="948"/>
        <end position="963"/>
    </location>
</feature>
<feature type="compositionally biased region" description="Polar residues" evidence="6">
    <location>
        <begin position="972"/>
        <end position="988"/>
    </location>
</feature>
<feature type="compositionally biased region" description="Low complexity" evidence="6">
    <location>
        <begin position="989"/>
        <end position="1013"/>
    </location>
</feature>
<feature type="compositionally biased region" description="Polar residues" evidence="6">
    <location>
        <begin position="1030"/>
        <end position="1064"/>
    </location>
</feature>
<feature type="compositionally biased region" description="Low complexity" evidence="6">
    <location>
        <begin position="1065"/>
        <end position="1082"/>
    </location>
</feature>
<feature type="compositionally biased region" description="Pro residues" evidence="6">
    <location>
        <begin position="1092"/>
        <end position="1101"/>
    </location>
</feature>
<feature type="binding site" evidence="2">
    <location>
        <begin position="127"/>
        <end position="134"/>
    </location>
    <ligand>
        <name>ATP</name>
        <dbReference type="ChEBI" id="CHEBI:30616"/>
    </ligand>
</feature>
<feature type="modified residue" description="Phosphoserine" evidence="1">
    <location>
        <position position="355"/>
    </location>
</feature>
<protein>
    <recommendedName>
        <fullName>Myosin-1</fullName>
    </recommendedName>
    <alternativeName>
        <fullName>Class I unconventional myosin</fullName>
    </alternativeName>
    <alternativeName>
        <fullName>Type I myosin</fullName>
    </alternativeName>
</protein>
<dbReference type="EMBL" id="CR382122">
    <property type="protein sequence ID" value="CAH02483.1"/>
    <property type="molecule type" value="Genomic_DNA"/>
</dbReference>
<dbReference type="RefSeq" id="XP_452090.1">
    <property type="nucleotide sequence ID" value="XM_452090.1"/>
</dbReference>
<dbReference type="SMR" id="Q6CVE9"/>
<dbReference type="FunCoup" id="Q6CVE9">
    <property type="interactions" value="387"/>
</dbReference>
<dbReference type="STRING" id="284590.Q6CVE9"/>
<dbReference type="PaxDb" id="284590-Q6CVE9"/>
<dbReference type="KEGG" id="kla:KLLA0_B12562g"/>
<dbReference type="eggNOG" id="KOG0162">
    <property type="taxonomic scope" value="Eukaryota"/>
</dbReference>
<dbReference type="HOGENOM" id="CLU_000192_7_6_1"/>
<dbReference type="InParanoid" id="Q6CVE9"/>
<dbReference type="OMA" id="NDQENQC"/>
<dbReference type="Proteomes" id="UP000000598">
    <property type="component" value="Chromosome B"/>
</dbReference>
<dbReference type="GO" id="GO:0030479">
    <property type="term" value="C:actin cortical patch"/>
    <property type="evidence" value="ECO:0007669"/>
    <property type="project" value="UniProtKB-SubCell"/>
</dbReference>
<dbReference type="GO" id="GO:0051286">
    <property type="term" value="C:cell tip"/>
    <property type="evidence" value="ECO:0007669"/>
    <property type="project" value="TreeGrafter"/>
</dbReference>
<dbReference type="GO" id="GO:0016459">
    <property type="term" value="C:myosin complex"/>
    <property type="evidence" value="ECO:0007669"/>
    <property type="project" value="UniProtKB-KW"/>
</dbReference>
<dbReference type="GO" id="GO:0005886">
    <property type="term" value="C:plasma membrane"/>
    <property type="evidence" value="ECO:0007669"/>
    <property type="project" value="TreeGrafter"/>
</dbReference>
<dbReference type="GO" id="GO:0051015">
    <property type="term" value="F:actin filament binding"/>
    <property type="evidence" value="ECO:0007669"/>
    <property type="project" value="TreeGrafter"/>
</dbReference>
<dbReference type="GO" id="GO:0005524">
    <property type="term" value="F:ATP binding"/>
    <property type="evidence" value="ECO:0007669"/>
    <property type="project" value="UniProtKB-KW"/>
</dbReference>
<dbReference type="GO" id="GO:0016787">
    <property type="term" value="F:hydrolase activity"/>
    <property type="evidence" value="ECO:0007669"/>
    <property type="project" value="UniProtKB-KW"/>
</dbReference>
<dbReference type="GO" id="GO:0000146">
    <property type="term" value="F:microfilament motor activity"/>
    <property type="evidence" value="ECO:0007669"/>
    <property type="project" value="TreeGrafter"/>
</dbReference>
<dbReference type="GO" id="GO:0051666">
    <property type="term" value="P:actin cortical patch localization"/>
    <property type="evidence" value="ECO:0007669"/>
    <property type="project" value="TreeGrafter"/>
</dbReference>
<dbReference type="GO" id="GO:0007015">
    <property type="term" value="P:actin filament organization"/>
    <property type="evidence" value="ECO:0007669"/>
    <property type="project" value="TreeGrafter"/>
</dbReference>
<dbReference type="GO" id="GO:0006897">
    <property type="term" value="P:endocytosis"/>
    <property type="evidence" value="ECO:0007669"/>
    <property type="project" value="TreeGrafter"/>
</dbReference>
<dbReference type="CDD" id="cd01378">
    <property type="entry name" value="MYSc_Myo1"/>
    <property type="match status" value="1"/>
</dbReference>
<dbReference type="FunFam" id="1.10.10.820:FF:000001">
    <property type="entry name" value="Myosin heavy chain"/>
    <property type="match status" value="1"/>
</dbReference>
<dbReference type="FunFam" id="1.20.120.720:FF:000015">
    <property type="entry name" value="Myosin I"/>
    <property type="match status" value="1"/>
</dbReference>
<dbReference type="FunFam" id="1.20.5.4820:FF:000004">
    <property type="entry name" value="Myosin IE"/>
    <property type="match status" value="1"/>
</dbReference>
<dbReference type="FunFam" id="1.20.58.530:FF:000007">
    <property type="entry name" value="Myosin IE"/>
    <property type="match status" value="1"/>
</dbReference>
<dbReference type="Gene3D" id="1.10.10.820">
    <property type="match status" value="1"/>
</dbReference>
<dbReference type="Gene3D" id="1.20.5.4820">
    <property type="match status" value="1"/>
</dbReference>
<dbReference type="Gene3D" id="1.20.58.530">
    <property type="match status" value="1"/>
</dbReference>
<dbReference type="Gene3D" id="3.40.850.10">
    <property type="entry name" value="Kinesin motor domain"/>
    <property type="match status" value="1"/>
</dbReference>
<dbReference type="Gene3D" id="1.20.120.720">
    <property type="entry name" value="Myosin VI head, motor domain, U50 subdomain"/>
    <property type="match status" value="1"/>
</dbReference>
<dbReference type="Gene3D" id="2.30.30.40">
    <property type="entry name" value="SH3 Domains"/>
    <property type="match status" value="1"/>
</dbReference>
<dbReference type="InterPro" id="IPR036961">
    <property type="entry name" value="Kinesin_motor_dom_sf"/>
</dbReference>
<dbReference type="InterPro" id="IPR001609">
    <property type="entry name" value="Myosin_head_motor_dom-like"/>
</dbReference>
<dbReference type="InterPro" id="IPR010926">
    <property type="entry name" value="Myosin_TH1"/>
</dbReference>
<dbReference type="InterPro" id="IPR036072">
    <property type="entry name" value="MYSc_Myo1"/>
</dbReference>
<dbReference type="InterPro" id="IPR027417">
    <property type="entry name" value="P-loop_NTPase"/>
</dbReference>
<dbReference type="InterPro" id="IPR036028">
    <property type="entry name" value="SH3-like_dom_sf"/>
</dbReference>
<dbReference type="InterPro" id="IPR001452">
    <property type="entry name" value="SH3_domain"/>
</dbReference>
<dbReference type="PANTHER" id="PTHR13140">
    <property type="entry name" value="MYOSIN"/>
    <property type="match status" value="1"/>
</dbReference>
<dbReference type="PANTHER" id="PTHR13140:SF837">
    <property type="entry name" value="MYOSIN-3-RELATED"/>
    <property type="match status" value="1"/>
</dbReference>
<dbReference type="Pfam" id="PF00063">
    <property type="entry name" value="Myosin_head"/>
    <property type="match status" value="1"/>
</dbReference>
<dbReference type="Pfam" id="PF06017">
    <property type="entry name" value="Myosin_TH1"/>
    <property type="match status" value="1"/>
</dbReference>
<dbReference type="Pfam" id="PF00018">
    <property type="entry name" value="SH3_1"/>
    <property type="match status" value="1"/>
</dbReference>
<dbReference type="PRINTS" id="PR00193">
    <property type="entry name" value="MYOSINHEAVY"/>
</dbReference>
<dbReference type="SMART" id="SM00242">
    <property type="entry name" value="MYSc"/>
    <property type="match status" value="1"/>
</dbReference>
<dbReference type="SMART" id="SM00326">
    <property type="entry name" value="SH3"/>
    <property type="match status" value="1"/>
</dbReference>
<dbReference type="SUPFAM" id="SSF52540">
    <property type="entry name" value="P-loop containing nucleoside triphosphate hydrolases"/>
    <property type="match status" value="1"/>
</dbReference>
<dbReference type="SUPFAM" id="SSF50044">
    <property type="entry name" value="SH3-domain"/>
    <property type="match status" value="1"/>
</dbReference>
<dbReference type="PROSITE" id="PS51456">
    <property type="entry name" value="MYOSIN_MOTOR"/>
    <property type="match status" value="1"/>
</dbReference>
<dbReference type="PROSITE" id="PS50002">
    <property type="entry name" value="SH3"/>
    <property type="match status" value="1"/>
</dbReference>
<dbReference type="PROSITE" id="PS51757">
    <property type="entry name" value="TH1"/>
    <property type="match status" value="1"/>
</dbReference>